<dbReference type="EMBL" id="AL445066">
    <property type="protein sequence ID" value="CAC12329.1"/>
    <property type="molecule type" value="Genomic_DNA"/>
</dbReference>
<dbReference type="RefSeq" id="WP_010901611.1">
    <property type="nucleotide sequence ID" value="NC_002578.1"/>
</dbReference>
<dbReference type="SMR" id="Q9HIX2"/>
<dbReference type="FunCoup" id="Q9HIX2">
    <property type="interactions" value="151"/>
</dbReference>
<dbReference type="STRING" id="273075.gene:9572427"/>
<dbReference type="PaxDb" id="273075-Ta1204"/>
<dbReference type="EnsemblBacteria" id="CAC12329">
    <property type="protein sequence ID" value="CAC12329"/>
    <property type="gene ID" value="CAC12329"/>
</dbReference>
<dbReference type="KEGG" id="tac:Ta1204"/>
<dbReference type="eggNOG" id="arCOG04108">
    <property type="taxonomic scope" value="Archaea"/>
</dbReference>
<dbReference type="HOGENOM" id="CLU_199465_0_0_2"/>
<dbReference type="InParanoid" id="Q9HIX2"/>
<dbReference type="OrthoDB" id="5718at2157"/>
<dbReference type="Proteomes" id="UP000001024">
    <property type="component" value="Chromosome"/>
</dbReference>
<dbReference type="GO" id="GO:1990904">
    <property type="term" value="C:ribonucleoprotein complex"/>
    <property type="evidence" value="ECO:0007669"/>
    <property type="project" value="UniProtKB-KW"/>
</dbReference>
<dbReference type="GO" id="GO:0005840">
    <property type="term" value="C:ribosome"/>
    <property type="evidence" value="ECO:0007669"/>
    <property type="project" value="UniProtKB-KW"/>
</dbReference>
<dbReference type="GO" id="GO:0003735">
    <property type="term" value="F:structural constituent of ribosome"/>
    <property type="evidence" value="ECO:0007669"/>
    <property type="project" value="InterPro"/>
</dbReference>
<dbReference type="GO" id="GO:0008270">
    <property type="term" value="F:zinc ion binding"/>
    <property type="evidence" value="ECO:0007669"/>
    <property type="project" value="UniProtKB-UniRule"/>
</dbReference>
<dbReference type="GO" id="GO:0006412">
    <property type="term" value="P:translation"/>
    <property type="evidence" value="ECO:0007669"/>
    <property type="project" value="UniProtKB-UniRule"/>
</dbReference>
<dbReference type="Gene3D" id="2.20.25.100">
    <property type="entry name" value="Zn-binding ribosomal proteins"/>
    <property type="match status" value="1"/>
</dbReference>
<dbReference type="HAMAP" id="MF_00371">
    <property type="entry name" value="Ribosomal_eS27"/>
    <property type="match status" value="1"/>
</dbReference>
<dbReference type="InterPro" id="IPR000592">
    <property type="entry name" value="Ribosomal_eS27"/>
</dbReference>
<dbReference type="InterPro" id="IPR023407">
    <property type="entry name" value="Ribosomal_eS27_Zn-bd_dom_sf"/>
</dbReference>
<dbReference type="InterPro" id="IPR011332">
    <property type="entry name" value="Ribosomal_zn-bd"/>
</dbReference>
<dbReference type="NCBIfam" id="NF001629">
    <property type="entry name" value="PRK00415.1"/>
    <property type="match status" value="1"/>
</dbReference>
<dbReference type="Pfam" id="PF01667">
    <property type="entry name" value="Ribosomal_S27e"/>
    <property type="match status" value="1"/>
</dbReference>
<dbReference type="SUPFAM" id="SSF57829">
    <property type="entry name" value="Zn-binding ribosomal proteins"/>
    <property type="match status" value="1"/>
</dbReference>
<dbReference type="PROSITE" id="PS01168">
    <property type="entry name" value="RIBOSOMAL_S27E"/>
    <property type="match status" value="1"/>
</dbReference>
<organism>
    <name type="scientific">Thermoplasma acidophilum (strain ATCC 25905 / DSM 1728 / JCM 9062 / NBRC 15155 / AMRC-C165)</name>
    <dbReference type="NCBI Taxonomy" id="273075"/>
    <lineage>
        <taxon>Archaea</taxon>
        <taxon>Methanobacteriati</taxon>
        <taxon>Thermoplasmatota</taxon>
        <taxon>Thermoplasmata</taxon>
        <taxon>Thermoplasmatales</taxon>
        <taxon>Thermoplasmataceae</taxon>
        <taxon>Thermoplasma</taxon>
    </lineage>
</organism>
<feature type="chain" id="PRO_0000149084" description="Small ribosomal subunit protein eS27">
    <location>
        <begin position="1"/>
        <end position="65"/>
    </location>
</feature>
<feature type="zinc finger region" description="C4-type" evidence="1">
    <location>
        <begin position="21"/>
        <end position="43"/>
    </location>
</feature>
<feature type="binding site" evidence="1">
    <location>
        <position position="21"/>
    </location>
    <ligand>
        <name>Zn(2+)</name>
        <dbReference type="ChEBI" id="CHEBI:29105"/>
    </ligand>
</feature>
<feature type="binding site" evidence="1">
    <location>
        <position position="24"/>
    </location>
    <ligand>
        <name>Zn(2+)</name>
        <dbReference type="ChEBI" id="CHEBI:29105"/>
    </ligand>
</feature>
<feature type="binding site" evidence="1">
    <location>
        <position position="40"/>
    </location>
    <ligand>
        <name>Zn(2+)</name>
        <dbReference type="ChEBI" id="CHEBI:29105"/>
    </ligand>
</feature>
<feature type="binding site" evidence="1">
    <location>
        <position position="43"/>
    </location>
    <ligand>
        <name>Zn(2+)</name>
        <dbReference type="ChEBI" id="CHEBI:29105"/>
    </ligand>
</feature>
<reference key="1">
    <citation type="journal article" date="2000" name="Nature">
        <title>The genome sequence of the thermoacidophilic scavenger Thermoplasma acidophilum.</title>
        <authorList>
            <person name="Ruepp A."/>
            <person name="Graml W."/>
            <person name="Santos-Martinez M.-L."/>
            <person name="Koretke K.K."/>
            <person name="Volker C."/>
            <person name="Mewes H.-W."/>
            <person name="Frishman D."/>
            <person name="Stocker S."/>
            <person name="Lupas A.N."/>
            <person name="Baumeister W."/>
        </authorList>
    </citation>
    <scope>NUCLEOTIDE SEQUENCE [LARGE SCALE GENOMIC DNA]</scope>
    <source>
        <strain>ATCC 25905 / DSM 1728 / JCM 9062 / NBRC 15155 / AMRC-C165</strain>
    </source>
</reference>
<proteinExistence type="inferred from homology"/>
<evidence type="ECO:0000255" key="1">
    <source>
        <dbReference type="HAMAP-Rule" id="MF_00371"/>
    </source>
</evidence>
<sequence length="65" mass="6834">MADVKFVKPKNINGHFVKIKCRDCGNVQVVFARPSSTVTCNICGATIAKPTGGILATSGEVVEVL</sequence>
<keyword id="KW-0479">Metal-binding</keyword>
<keyword id="KW-1185">Reference proteome</keyword>
<keyword id="KW-0687">Ribonucleoprotein</keyword>
<keyword id="KW-0689">Ribosomal protein</keyword>
<keyword id="KW-0862">Zinc</keyword>
<keyword id="KW-0863">Zinc-finger</keyword>
<accession>Q9HIX2</accession>
<comment type="cofactor">
    <cofactor evidence="1">
        <name>Zn(2+)</name>
        <dbReference type="ChEBI" id="CHEBI:29105"/>
    </cofactor>
    <text evidence="1">Binds 1 zinc ion per subunit.</text>
</comment>
<comment type="subunit">
    <text evidence="1">Part of the 30S ribosomal subunit.</text>
</comment>
<comment type="similarity">
    <text evidence="1">Belongs to the eukaryotic ribosomal protein eS27 family.</text>
</comment>
<name>RS27_THEAC</name>
<protein>
    <recommendedName>
        <fullName evidence="1">Small ribosomal subunit protein eS27</fullName>
    </recommendedName>
</protein>
<gene>
    <name evidence="1" type="primary">rps27e</name>
    <name type="ordered locus">Ta1204</name>
</gene>